<name>MENH_SALPK</name>
<keyword id="KW-0456">Lyase</keyword>
<keyword id="KW-0474">Menaquinone biosynthesis</keyword>
<dbReference type="EC" id="4.2.99.20" evidence="1"/>
<dbReference type="EMBL" id="FM200053">
    <property type="protein sequence ID" value="CAR58648.1"/>
    <property type="molecule type" value="Genomic_DNA"/>
</dbReference>
<dbReference type="RefSeq" id="WP_000979139.1">
    <property type="nucleotide sequence ID" value="NC_011147.1"/>
</dbReference>
<dbReference type="SMR" id="B5BCN7"/>
<dbReference type="ESTHER" id="salty-YFBB">
    <property type="family name" value="MenH_SHCHC"/>
</dbReference>
<dbReference type="KEGG" id="sek:SSPA0519"/>
<dbReference type="HOGENOM" id="CLU_020336_38_2_6"/>
<dbReference type="UniPathway" id="UPA00079"/>
<dbReference type="UniPathway" id="UPA01057">
    <property type="reaction ID" value="UER00900"/>
</dbReference>
<dbReference type="Proteomes" id="UP000001869">
    <property type="component" value="Chromosome"/>
</dbReference>
<dbReference type="GO" id="GO:0070205">
    <property type="term" value="F:2-succinyl-6-hydroxy-2,4-cyclohexadiene-1-carboxylate synthase activity"/>
    <property type="evidence" value="ECO:0007669"/>
    <property type="project" value="UniProtKB-UniRule"/>
</dbReference>
<dbReference type="GO" id="GO:0009234">
    <property type="term" value="P:menaquinone biosynthetic process"/>
    <property type="evidence" value="ECO:0007669"/>
    <property type="project" value="UniProtKB-UniRule"/>
</dbReference>
<dbReference type="Gene3D" id="3.40.50.1820">
    <property type="entry name" value="alpha/beta hydrolase"/>
    <property type="match status" value="1"/>
</dbReference>
<dbReference type="HAMAP" id="MF_01660">
    <property type="entry name" value="MenH"/>
    <property type="match status" value="1"/>
</dbReference>
<dbReference type="InterPro" id="IPR000073">
    <property type="entry name" value="AB_hydrolase_1"/>
</dbReference>
<dbReference type="InterPro" id="IPR029058">
    <property type="entry name" value="AB_hydrolase_fold"/>
</dbReference>
<dbReference type="InterPro" id="IPR022485">
    <property type="entry name" value="SHCHC_synthase_MenH"/>
</dbReference>
<dbReference type="NCBIfam" id="TIGR03695">
    <property type="entry name" value="menH_SHCHC"/>
    <property type="match status" value="1"/>
</dbReference>
<dbReference type="NCBIfam" id="NF008340">
    <property type="entry name" value="PRK11126.1"/>
    <property type="match status" value="1"/>
</dbReference>
<dbReference type="PANTHER" id="PTHR42916">
    <property type="entry name" value="2-SUCCINYL-5-ENOLPYRUVYL-6-HYDROXY-3-CYCLOHEXENE-1-CARBOXYLATE SYNTHASE"/>
    <property type="match status" value="1"/>
</dbReference>
<dbReference type="PANTHER" id="PTHR42916:SF1">
    <property type="entry name" value="PROTEIN PHYLLO, CHLOROPLASTIC"/>
    <property type="match status" value="1"/>
</dbReference>
<dbReference type="Pfam" id="PF12697">
    <property type="entry name" value="Abhydrolase_6"/>
    <property type="match status" value="1"/>
</dbReference>
<dbReference type="SUPFAM" id="SSF53474">
    <property type="entry name" value="alpha/beta-Hydrolases"/>
    <property type="match status" value="1"/>
</dbReference>
<organism>
    <name type="scientific">Salmonella paratyphi A (strain AKU_12601)</name>
    <dbReference type="NCBI Taxonomy" id="554290"/>
    <lineage>
        <taxon>Bacteria</taxon>
        <taxon>Pseudomonadati</taxon>
        <taxon>Pseudomonadota</taxon>
        <taxon>Gammaproteobacteria</taxon>
        <taxon>Enterobacterales</taxon>
        <taxon>Enterobacteriaceae</taxon>
        <taxon>Salmonella</taxon>
    </lineage>
</organism>
<protein>
    <recommendedName>
        <fullName evidence="1">2-succinyl-6-hydroxy-2,4-cyclohexadiene-1-carboxylate synthase</fullName>
        <shortName evidence="1">SHCHC synthase</shortName>
        <ecNumber evidence="1">4.2.99.20</ecNumber>
    </recommendedName>
</protein>
<feature type="chain" id="PRO_1000187121" description="2-succinyl-6-hydroxy-2,4-cyclohexadiene-1-carboxylate synthase">
    <location>
        <begin position="1"/>
        <end position="252"/>
    </location>
</feature>
<evidence type="ECO:0000255" key="1">
    <source>
        <dbReference type="HAMAP-Rule" id="MF_01660"/>
    </source>
</evidence>
<sequence length="252" mass="27651">MMLHAQHMPGQPGAPSLVFLHGFSGDCREWQPVGEQFHGCSRLYIDLPGHGGSAAIPVGGFADVIRLLRATLISYNILKFWLVGYSLGGRVAMMAACQGIPGLCGLVVEGGHPGLQNERARAERRLSDGRWAERFRHEPLTEVFHDWYQQPVFASLTAQQRQALTALRSQNNGETLAAMLEATSLAVQPDLREALNALAFPFYYLCGERDSKFRALAQEVAATCHVIRNAGHNAHRENPAGVVDSLAQILRL</sequence>
<proteinExistence type="inferred from homology"/>
<accession>B5BCN7</accession>
<reference key="1">
    <citation type="journal article" date="2009" name="BMC Genomics">
        <title>Pseudogene accumulation in the evolutionary histories of Salmonella enterica serovars Paratyphi A and Typhi.</title>
        <authorList>
            <person name="Holt K.E."/>
            <person name="Thomson N.R."/>
            <person name="Wain J."/>
            <person name="Langridge G.C."/>
            <person name="Hasan R."/>
            <person name="Bhutta Z.A."/>
            <person name="Quail M.A."/>
            <person name="Norbertczak H."/>
            <person name="Walker D."/>
            <person name="Simmonds M."/>
            <person name="White B."/>
            <person name="Bason N."/>
            <person name="Mungall K."/>
            <person name="Dougan G."/>
            <person name="Parkhill J."/>
        </authorList>
    </citation>
    <scope>NUCLEOTIDE SEQUENCE [LARGE SCALE GENOMIC DNA]</scope>
    <source>
        <strain>AKU_12601</strain>
    </source>
</reference>
<comment type="function">
    <text evidence="1">Catalyzes a proton abstraction reaction that results in 2,5-elimination of pyruvate from 2-succinyl-5-enolpyruvyl-6-hydroxy-3-cyclohexene-1-carboxylate (SEPHCHC) and the formation of 2-succinyl-6-hydroxy-2,4-cyclohexadiene-1-carboxylate (SHCHC).</text>
</comment>
<comment type="catalytic activity">
    <reaction evidence="1">
        <text>5-enolpyruvoyl-6-hydroxy-2-succinyl-cyclohex-3-ene-1-carboxylate = (1R,6R)-6-hydroxy-2-succinyl-cyclohexa-2,4-diene-1-carboxylate + pyruvate</text>
        <dbReference type="Rhea" id="RHEA:25597"/>
        <dbReference type="ChEBI" id="CHEBI:15361"/>
        <dbReference type="ChEBI" id="CHEBI:58689"/>
        <dbReference type="ChEBI" id="CHEBI:58818"/>
        <dbReference type="EC" id="4.2.99.20"/>
    </reaction>
</comment>
<comment type="pathway">
    <text evidence="1">Quinol/quinone metabolism; 1,4-dihydroxy-2-naphthoate biosynthesis; 1,4-dihydroxy-2-naphthoate from chorismate: step 3/7.</text>
</comment>
<comment type="pathway">
    <text evidence="1">Quinol/quinone metabolism; menaquinone biosynthesis.</text>
</comment>
<comment type="subunit">
    <text evidence="1">Monomer.</text>
</comment>
<comment type="similarity">
    <text evidence="1">Belongs to the AB hydrolase superfamily. MenH family.</text>
</comment>
<gene>
    <name evidence="1" type="primary">menH</name>
    <name type="ordered locus">SSPA0519</name>
</gene>